<keyword id="KW-0002">3D-structure</keyword>
<keyword id="KW-0186">Copper</keyword>
<keyword id="KW-0903">Direct protein sequencing</keyword>
<keyword id="KW-0479">Metal-binding</keyword>
<keyword id="KW-0560">Oxidoreductase</keyword>
<keyword id="KW-0574">Periplasm</keyword>
<keyword id="KW-1185">Reference proteome</keyword>
<keyword id="KW-0677">Repeat</keyword>
<keyword id="KW-0732">Signal</keyword>
<evidence type="ECO:0000255" key="1"/>
<evidence type="ECO:0000255" key="2">
    <source>
        <dbReference type="PROSITE-ProRule" id="PRU00648"/>
    </source>
</evidence>
<evidence type="ECO:0000269" key="3">
    <source>
    </source>
</evidence>
<evidence type="ECO:0000269" key="4">
    <source>
    </source>
</evidence>
<evidence type="ECO:0000269" key="5">
    <source>
    </source>
</evidence>
<evidence type="ECO:0000269" key="6">
    <source>
    </source>
</evidence>
<evidence type="ECO:0000269" key="7">
    <source>
    </source>
</evidence>
<evidence type="ECO:0000269" key="8">
    <source>
    </source>
</evidence>
<evidence type="ECO:0000269" key="9">
    <source>
    </source>
</evidence>
<evidence type="ECO:0000269" key="10">
    <source>
    </source>
</evidence>
<evidence type="ECO:0000269" key="11">
    <source>
    </source>
</evidence>
<evidence type="ECO:0000269" key="12">
    <source>
    </source>
</evidence>
<evidence type="ECO:0000269" key="13">
    <source>
    </source>
</evidence>
<evidence type="ECO:0000269" key="14">
    <source>
    </source>
</evidence>
<evidence type="ECO:0000269" key="15">
    <source>
    </source>
</evidence>
<evidence type="ECO:0000269" key="16">
    <source>
    </source>
</evidence>
<evidence type="ECO:0000269" key="17">
    <source>
    </source>
</evidence>
<evidence type="ECO:0000269" key="18">
    <source>
    </source>
</evidence>
<evidence type="ECO:0000269" key="19">
    <source>
    </source>
</evidence>
<evidence type="ECO:0000269" key="20">
    <source>
    </source>
</evidence>
<evidence type="ECO:0000269" key="21">
    <source>
    </source>
</evidence>
<evidence type="ECO:0000269" key="22">
    <source>
    </source>
</evidence>
<evidence type="ECO:0000269" key="23">
    <source>
    </source>
</evidence>
<evidence type="ECO:0000269" key="24">
    <source>
    </source>
</evidence>
<evidence type="ECO:0000269" key="25">
    <source>
    </source>
</evidence>
<evidence type="ECO:0000303" key="26">
    <source>
    </source>
</evidence>
<evidence type="ECO:0000303" key="27">
    <source>
    </source>
</evidence>
<evidence type="ECO:0000303" key="28">
    <source>
    </source>
</evidence>
<evidence type="ECO:0000303" key="29">
    <source>
    </source>
</evidence>
<evidence type="ECO:0000305" key="30"/>
<evidence type="ECO:0000305" key="31">
    <source>
    </source>
</evidence>
<evidence type="ECO:0000305" key="32">
    <source>
    </source>
</evidence>
<evidence type="ECO:0007744" key="33">
    <source>
        <dbReference type="PDB" id="1KV7"/>
    </source>
</evidence>
<evidence type="ECO:0007744" key="34">
    <source>
        <dbReference type="PDB" id="1N68"/>
    </source>
</evidence>
<evidence type="ECO:0007744" key="35">
    <source>
        <dbReference type="PDB" id="1PF3"/>
    </source>
</evidence>
<evidence type="ECO:0007744" key="36">
    <source>
        <dbReference type="PDB" id="2FQD"/>
    </source>
</evidence>
<evidence type="ECO:0007744" key="37">
    <source>
        <dbReference type="PDB" id="2FQE"/>
    </source>
</evidence>
<evidence type="ECO:0007744" key="38">
    <source>
        <dbReference type="PDB" id="2FQF"/>
    </source>
</evidence>
<evidence type="ECO:0007744" key="39">
    <source>
        <dbReference type="PDB" id="2FQG"/>
    </source>
</evidence>
<evidence type="ECO:0007744" key="40">
    <source>
        <dbReference type="PDB" id="2YXV"/>
    </source>
</evidence>
<evidence type="ECO:0007744" key="41">
    <source>
        <dbReference type="PDB" id="2YXW"/>
    </source>
</evidence>
<evidence type="ECO:0007744" key="42">
    <source>
        <dbReference type="PDB" id="3NSC"/>
    </source>
</evidence>
<evidence type="ECO:0007744" key="43">
    <source>
        <dbReference type="PDB" id="3NSD"/>
    </source>
</evidence>
<evidence type="ECO:0007744" key="44">
    <source>
        <dbReference type="PDB" id="3NSF"/>
    </source>
</evidence>
<evidence type="ECO:0007744" key="45">
    <source>
        <dbReference type="PDB" id="3NSY"/>
    </source>
</evidence>
<evidence type="ECO:0007744" key="46">
    <source>
        <dbReference type="PDB" id="3NT0"/>
    </source>
</evidence>
<evidence type="ECO:0007744" key="47">
    <source>
        <dbReference type="PDB" id="3OD3"/>
    </source>
</evidence>
<evidence type="ECO:0007744" key="48">
    <source>
        <dbReference type="PDB" id="4E9Q"/>
    </source>
</evidence>
<evidence type="ECO:0007744" key="49">
    <source>
        <dbReference type="PDB" id="4E9R"/>
    </source>
</evidence>
<evidence type="ECO:0007744" key="50">
    <source>
        <dbReference type="PDB" id="4E9S"/>
    </source>
</evidence>
<evidence type="ECO:0007744" key="51">
    <source>
        <dbReference type="PDB" id="4E9T"/>
    </source>
</evidence>
<evidence type="ECO:0007744" key="52">
    <source>
        <dbReference type="PDB" id="4EF3"/>
    </source>
</evidence>
<evidence type="ECO:0007744" key="53">
    <source>
        <dbReference type="PDB" id="4NER"/>
    </source>
</evidence>
<evidence type="ECO:0007744" key="54">
    <source>
        <dbReference type="PDB" id="5YS1"/>
    </source>
</evidence>
<evidence type="ECO:0007744" key="55">
    <source>
        <dbReference type="PDB" id="5YS5"/>
    </source>
</evidence>
<evidence type="ECO:0007744" key="56">
    <source>
        <dbReference type="PDB" id="6IM7"/>
    </source>
</evidence>
<evidence type="ECO:0007744" key="57">
    <source>
        <dbReference type="PDB" id="6IM8"/>
    </source>
</evidence>
<evidence type="ECO:0007744" key="58">
    <source>
        <dbReference type="PDB" id="6IM9"/>
    </source>
</evidence>
<evidence type="ECO:0007829" key="59">
    <source>
        <dbReference type="PDB" id="3OD3"/>
    </source>
</evidence>
<evidence type="ECO:0007829" key="60">
    <source>
        <dbReference type="PDB" id="4E9S"/>
    </source>
</evidence>
<evidence type="ECO:0007829" key="61">
    <source>
        <dbReference type="PDB" id="5YS1"/>
    </source>
</evidence>
<evidence type="ECO:0007829" key="62">
    <source>
        <dbReference type="PDB" id="6IM9"/>
    </source>
</evidence>
<gene>
    <name evidence="26" type="primary">cueO</name>
    <name type="synonym">yacK</name>
    <name type="ordered locus">b0123</name>
    <name type="ordered locus">JW0119</name>
</gene>
<comment type="function">
    <text evidence="5 6 8 12 16 19">Multicopper oxidase involved in copper homeostasis and copper tolerance under aerobic conditions (PubMed:11222619, PubMed:11399769, PubMed:11527384, PubMed:15516598). Is responsible for the oxidation of Cu(+) to the less harmful Cu(2+) in the periplasm, thereby preventing Cu(+) from entering the cytoplasm (PubMed:15516598, PubMed:20088522, PubMed:25679350). Probably primarily functions as a cuprous oxidase in vivo (PubMed:20088522).</text>
</comment>
<comment type="function">
    <text evidence="7 8 9 11 12 15 19">In vitro, in the presence of excess copper ions, exhibits ferroxidase and phenoloxidase activities (PubMed:11466290, PubMed:11527384, PubMed:11867755, PubMed:15317788, PubMed:15516598, PubMed:17804014, PubMed:25679350). Fe(2+) is an excellent substrate in the presence of excess Cu(2+), but is inactive in the absence of Cu(2+) (PubMed:15516598, PubMed:17804014). Oxidizes the phenolate iron siderophores enterobactin, 2,3-dihydroxybenzoate (2,3-DHB) and 3-hydroxyanthranilate (3-HAA) (PubMed:11466290, PubMed:15317788). Oxidation and thus inactivation of enterobactin could protect cells from the interaction of enterobactin with copper and play a central role as an interface between copper detoxification and iron homeostasis (PubMed:11466290, PubMed:15317788). Also oxidizes a variety of phenolic model substrates, including 2,2'-azinobis(3-ethylbenzthiazolinesulfonic acid) (ABTS), p-phenylenediamine (pPD), 2,6-dimethoxyphenol (2,6-DMP) and 3,4-dihydroxybenzoic acid (3,4-DHB) (PubMed:11466290, PubMed:11527384, PubMed:17804014, PubMed:25679350).</text>
</comment>
<comment type="catalytic activity">
    <reaction evidence="12 16">
        <text>4 Cu(+) + O2 + 4 H(+) = 4 Cu(2+) + 2 H2O</text>
        <dbReference type="Rhea" id="RHEA:30083"/>
        <dbReference type="ChEBI" id="CHEBI:15377"/>
        <dbReference type="ChEBI" id="CHEBI:15378"/>
        <dbReference type="ChEBI" id="CHEBI:15379"/>
        <dbReference type="ChEBI" id="CHEBI:29036"/>
        <dbReference type="ChEBI" id="CHEBI:49552"/>
        <dbReference type="EC" id="1.16.3.4"/>
    </reaction>
    <physiologicalReaction direction="left-to-right" evidence="12 16">
        <dbReference type="Rhea" id="RHEA:30084"/>
    </physiologicalReaction>
</comment>
<comment type="cofactor">
    <cofactor evidence="7 8 9 16">
        <name>Cu cation</name>
        <dbReference type="ChEBI" id="CHEBI:23378"/>
    </cofactor>
    <text evidence="8 9 10 13 15 17 18 21 22">Binds 4 Cu cations per monomer (PubMed:11527384, PubMed:11867755, PubMed:12794077, PubMed:17217912, PubMed:17804014, PubMed:21903583, PubMed:24598746, PubMed:27380373, PubMed:30250139). Contains a mononuclear type 1 (T1) or 'blue' copper site, and a trinuclear copper center consisting of one type 2 (T2) or 'normal' copper site, and two type 3 (T3) or 'binuclear' copper sites (PubMed:11867755).</text>
</comment>
<comment type="activity regulation">
    <text evidence="7 8 9 10 12 15 17">Ferroxidase and phenoloxidase activities are enhanced considerably in the presence of excess copper ions (PubMed:11466290, PubMed:11527384, PubMed:11867755, PubMed:15516598, PubMed:17804014). A labile regulatory copper ion near the T1 copper site is important for the copper associated activation of enzyme activity (PubMed:12794077). Ag(+) acts as a potent inhibitor of oxidase activity by binding at Cu(+) binding sites, blocking Cu(+) substrate binding and oxidation (PubMed:21903583). pPD oxidase activity is strongly inhibited by sodium azide, an inhibitor of the electron transfer (PubMed:11527384).</text>
</comment>
<comment type="biophysicochemical properties">
    <kinetics>
        <KM evidence="12">165 uM for Cu(+) (at pH 5.0, in the absence of added Cu(2+))</KM>
        <KM evidence="12">169 uM for Cu(+) (at pH 5.0, in the presence of 1 mM Cu(2+))</KM>
        <KM evidence="12">90 uM for Cu(+) (at pH 7.0, in the presence of 1 mM Cu(2+))</KM>
        <KM evidence="12">129 uM for Fe(2+) (at pH 5.0, in the presence of 1 mM Cu(2+))</KM>
        <KM evidence="7">70 uM for Fe(2+) (at pH 5.0, in the presence of 1 mM Cu(2+))</KM>
        <KM evidence="7">40 uM for enterobactin (at pH 5.0, in the presence of 1 mM Cu(2+))</KM>
        <KM evidence="11">1.5 uM for ferric enterobactin (at pH 6.5, in the presence of 0.5 mM Cu(2+))</KM>
        <KM evidence="7">290 uM for 2,3-DHB (at pH 5.0, in the presence of 1 mM Cu(2+))</KM>
        <KM evidence="7">690 uM for 3-HAA (at pH 5.0, in the presence of 1 mM Cu(2+))</KM>
        <KM evidence="7">2500 uM for ABTS (at pH 5.0, in the presence of 1 mM Cu(2+))</KM>
        <KM evidence="7">3200 uM for pPD (at pH 5.0, in the presence of 1 mM Cu(2+))</KM>
        <KM evidence="7">2120 uM for 2,6-DMP (at pH 5.0, in the presence of 1 mM Cu(2+))</KM>
        <KM evidence="9">70.5 uM for 2,6-DMP (at pH 6.5, in the presence of 250 uM Cu(2+))</KM>
        <KM evidence="7">430 uM for 3,4-DHB (at pH 5.0, in the presence of 1 mM Cu(2+))</KM>
        <Vmax evidence="7">41.0 umol/min/mg enzyme with Fe(2+) as substrate (at pH 5.0, in the presence of 1 mM Cu(2+))</Vmax>
        <Vmax evidence="7">9.7 umol/min/mg enzyme with enterobactin as substrate (at pH 5.0, in the presence of 1 mM Cu(2+))</Vmax>
        <Vmax evidence="7">3.8 umol/min/mg enzyme with 2,3-DHB as substrate (at pH 5.0, in the presence of 1 mM Cu(2+))</Vmax>
        <Vmax evidence="7">63.9 umol/min/mg enzyme with 3-HAA as substrate (at pH 5.0, in the presence of 1 mM Cu(2+))</Vmax>
        <Vmax evidence="7">72.1 umol/min/mg enzyme with ABTS as substrate (at pH 5.0, in the presence of 1 mM Cu(2+))</Vmax>
        <Vmax evidence="7">95.9 umol/min/mg enzyme with pPD as substrate (at pH 5.0, in the presence of 1 mM Cu(2+))</Vmax>
        <Vmax evidence="7">91.7 umol/min/mg enzyme with 2,6-DMP as substrate (at pH 5.0, in the presence of 1 mM Cu(2+))</Vmax>
        <Vmax evidence="7">7.2 umol/min/mg enzyme with 3,4-DHB as substrate (at pH 5.0, in the presence of 1 mM Cu(2+))</Vmax>
        <text evidence="9 12">kcat is 914 min(-1) with Cu(+) as substrate (at pH 5.0, in the absence of added Cu(2+)) (PubMed:15516598). kcat is 651 min(-1) with Cu(+) as substrate (at pH 5.0, in the presence of 1 mM Cu(2+)) (PubMed:15516598). kcat is 57 min(-1) with Cu(+) as substrate (at pH 7.0, in the presence of 1 mM Cu(2+)) (PubMed:15516598). kcat is 215 min(-1) with Fe(2+) as substrate (at pH 5.0, in the presence of 1 mM Cu(2+)) (PubMed:15516598). kcat is 120 sec(-1) with 2,6-DMP as substrate (PubMed:11867755).</text>
    </kinetics>
    <phDependence>
        <text evidence="9 10">Optimum pH is 6.5 with 2,6-DMP as substrate (PubMed:11867755). The pH dependence of the reaction as monitored by oxygen consumption shows a broad activity peak between pH 5 and 6 and a second activity peak at pH 8 (PubMed:12794077).</text>
    </phDependence>
    <temperatureDependence>
        <text evidence="9">Optimum temperature is 55 degrees Celsius with 2,6-DMP as substrate.</text>
    </temperatureDependence>
</comment>
<comment type="subunit">
    <text evidence="9 31">Monomer.</text>
</comment>
<comment type="subcellular location">
    <subcellularLocation>
        <location evidence="3 6 8 20">Periplasm</location>
    </subcellularLocation>
    <text evidence="3 14 20">Exported via the Tat pathway (PubMed:10766774, PubMed:17218314, PubMed:27129241). Cytoplasmic CueO does not contain copper, even under copper stress conditions, and is transported as an apo-protein to the periplasm. Periplasmic CueO is readily activated by the addition of copper ions in vitro or under copper stress conditions in vivo (PubMed:27129241). Can also be exported by the Sec system (PubMed:17218314).</text>
</comment>
<comment type="induction">
    <text evidence="4">By CueR, in response to increasing copper concentrations.</text>
</comment>
<comment type="domain">
    <text evidence="9 10 17 19">Contains a methionine-rich region, which includes a helix that covers the entrance to the type 1 (T1) copper site and blocks access to the T1 site in the absence of excess copper (PubMed:11867755, PubMed:21903583). This methionine-rich insert is involved in the binding and oxidation of Cu(+) (PubMed:21903583). It also binds additional copper ions, which are important for the copper-associated regulation of activity (PubMed:11867755, PubMed:12794077, PubMed:21903583). The methionine-rich region provides at least three additional Cu(+) binding sites: Cu5 (sCu), Cu6 and Cu7, which play related but distinct roles in CueO oxidase activities (PubMed:25679350). The internal Cu5 site functions as an electron-transfer mediator connecting surface-exposed sites Cu6 and Cu7 to site T1. Both Cu6 and Cu7 are probable substrate oxidation sites on the protein surface (PubMed:25679350).</text>
</comment>
<comment type="PTM">
    <text evidence="3 14 20 25">Exported by the Tat system (PubMed:10766774, PubMed:17218314, PubMed:27129241). The position of the signal peptide cleavage has been experimentally proven (PubMed:9298646).</text>
</comment>
<comment type="disruption phenotype">
    <text evidence="5 6 11">Disruption mutant is slightly more copper sensitive on complex medium than wild-type strain under aerobic conditions (PubMed:11222619, PubMed:11399769). Deletion of the gene does not affect copper sensitivity under anaerobic growth conditions (PubMed:11399769). Deletion of the gene leads to elevated biosynthesis of enterobactin under conditions of iron scarcity when copper is present (PubMed:15317788).</text>
</comment>
<comment type="biotechnology">
    <text evidence="23 24">Triggering CueO activity at need by the addition of copper salts with minor toxic effects on E.coli cells could be used as a simple tool for biosynthetic purposes (PubMed:33332702). The protein was also identified as robust host protein for use in biosensing and drug-screening applications (PubMed:30770473).</text>
</comment>
<comment type="similarity">
    <text evidence="30">Belongs to the multicopper oxidase family.</text>
</comment>
<accession>P36649</accession>
<accession>P75655</accession>
<accession>Q8KMZ0</accession>
<organism>
    <name type="scientific">Escherichia coli (strain K12)</name>
    <dbReference type="NCBI Taxonomy" id="83333"/>
    <lineage>
        <taxon>Bacteria</taxon>
        <taxon>Pseudomonadati</taxon>
        <taxon>Pseudomonadota</taxon>
        <taxon>Gammaproteobacteria</taxon>
        <taxon>Enterobacterales</taxon>
        <taxon>Enterobacteriaceae</taxon>
        <taxon>Escherichia</taxon>
    </lineage>
</organism>
<reference key="1">
    <citation type="journal article" date="1994" name="Nucleic Acids Res.">
        <title>Systematic sequencing of the Escherichia coli genome: analysis of the 2.4-4.1 min (110,917-193,643 bp) region.</title>
        <authorList>
            <person name="Fujita N."/>
            <person name="Mori H."/>
            <person name="Yura T."/>
            <person name="Ishihama A."/>
        </authorList>
    </citation>
    <scope>NUCLEOTIDE SEQUENCE [LARGE SCALE GENOMIC DNA]</scope>
    <source>
        <strain>K12 / W3110 / ATCC 27325 / DSM 5911</strain>
    </source>
</reference>
<reference key="2">
    <citation type="journal article" date="1997" name="Science">
        <title>The complete genome sequence of Escherichia coli K-12.</title>
        <authorList>
            <person name="Blattner F.R."/>
            <person name="Plunkett G. III"/>
            <person name="Bloch C.A."/>
            <person name="Perna N.T."/>
            <person name="Burland V."/>
            <person name="Riley M."/>
            <person name="Collado-Vides J."/>
            <person name="Glasner J.D."/>
            <person name="Rode C.K."/>
            <person name="Mayhew G.F."/>
            <person name="Gregor J."/>
            <person name="Davis N.W."/>
            <person name="Kirkpatrick H.A."/>
            <person name="Goeden M.A."/>
            <person name="Rose D.J."/>
            <person name="Mau B."/>
            <person name="Shao Y."/>
        </authorList>
    </citation>
    <scope>NUCLEOTIDE SEQUENCE [LARGE SCALE GENOMIC DNA]</scope>
    <source>
        <strain>K12 / MG1655 / ATCC 47076</strain>
    </source>
</reference>
<reference key="3">
    <citation type="journal article" date="2006" name="Mol. Syst. Biol.">
        <title>Highly accurate genome sequences of Escherichia coli K-12 strains MG1655 and W3110.</title>
        <authorList>
            <person name="Hayashi K."/>
            <person name="Morooka N."/>
            <person name="Yamamoto Y."/>
            <person name="Fujita K."/>
            <person name="Isono K."/>
            <person name="Choi S."/>
            <person name="Ohtsubo E."/>
            <person name="Baba T."/>
            <person name="Wanner B.L."/>
            <person name="Mori H."/>
            <person name="Horiuchi T."/>
        </authorList>
    </citation>
    <scope>NUCLEOTIDE SEQUENCE [LARGE SCALE GENOMIC DNA]</scope>
    <scope>SEQUENCE REVISION</scope>
    <source>
        <strain>K12 / W3110 / ATCC 27325 / DSM 5911</strain>
    </source>
</reference>
<reference key="4">
    <citation type="journal article" date="1997" name="Electrophoresis">
        <title>Comparing the predicted and observed properties of proteins encoded in the genome of Escherichia coli K-12.</title>
        <authorList>
            <person name="Link A.J."/>
            <person name="Robison K."/>
            <person name="Church G.M."/>
        </authorList>
    </citation>
    <scope>PROTEIN SEQUENCE OF 29-40</scope>
    <source>
        <strain>K12 / EMG2</strain>
    </source>
</reference>
<reference key="5">
    <citation type="journal article" date="1999" name="Electrophoresis">
        <title>Enrichment of low abundance proteins of Escherichia coli by hydroxyapatite chromatography.</title>
        <authorList>
            <person name="Fountoulakis M."/>
            <person name="Takacs M.-F."/>
            <person name="Berndt P."/>
            <person name="Langen H."/>
            <person name="Takacs B."/>
        </authorList>
    </citation>
    <scope>IDENTIFICATION BY MASS SPECTROMETRY</scope>
    <source>
        <strain>B / BL21</strain>
    </source>
</reference>
<reference key="6">
    <citation type="journal article" date="2000" name="J. Biol. Chem.">
        <title>The twin arginine consensus motif of Tat signal peptides is involved in Sec-independent protein targeting in Escherichia coli.</title>
        <authorList>
            <person name="Stanley N.R."/>
            <person name="Palmer T."/>
            <person name="Berks B.C."/>
        </authorList>
    </citation>
    <scope>EXPORT VIA THE TAT-SYSTEM</scope>
    <scope>SUBCELLULAR LOCATION</scope>
    <scope>MUTAGENESIS OF ARG-3 AND LYS-8</scope>
</reference>
<reference key="7">
    <citation type="journal article" date="2000" name="J. Biol. Chem.">
        <title>Transcriptional activation of an Escherichia coli copper efflux regulon by the chromosomal merR homologue, cueR.</title>
        <authorList>
            <person name="Outten F.W."/>
            <person name="Outten C.E."/>
            <person name="Hale J.A."/>
            <person name="O'Halloran T.V."/>
        </authorList>
    </citation>
    <scope>NOMENCLATURE</scope>
    <scope>INDUCTION BY CUER</scope>
    <source>
        <strain>K12 / DH5-alpha</strain>
    </source>
</reference>
<reference key="8">
    <citation type="journal article" date="2001" name="J. Bacteriol.">
        <title>Genes involved in copper homeostasis in Escherichia coli.</title>
        <authorList>
            <person name="Grass G."/>
            <person name="Rensing C."/>
        </authorList>
    </citation>
    <scope>POSSIBLE FUNCTION IN COPPER TOLERANCE</scope>
    <scope>DISRUPTION PHENOTYPE</scope>
</reference>
<reference key="9">
    <citation type="journal article" date="2001" name="J. Biol. Chem.">
        <title>The independent cue and cus systems confer copper tolerance during aerobic and anaerobic growth in Escherichia coli.</title>
        <authorList>
            <person name="Outten F.W."/>
            <person name="Huffman D.L."/>
            <person name="Hale J.A."/>
            <person name="O'Halloran T.V."/>
        </authorList>
    </citation>
    <scope>FUNCTION IN COPPER TOLERANCE</scope>
    <scope>SUBCELLULAR LOCATION</scope>
    <scope>DISRUPTION PHENOTYPE</scope>
    <source>
        <strain>K12</strain>
    </source>
</reference>
<reference key="10">
    <citation type="journal article" date="2001" name="J. Bacteriol.">
        <title>Oxidation of phenolate siderophores by the multicopper oxidase encoded by the Escherichia coli yacK gene.</title>
        <authorList>
            <person name="Kim C."/>
            <person name="Lorenz W.W."/>
            <person name="Hoopes J.T."/>
            <person name="Dean J.F.D."/>
        </authorList>
    </citation>
    <scope>FUNCTION AS FERROXIDASE AND PHENOLOXIDASE</scope>
    <scope>COFACTOR</scope>
    <scope>ACTIVITY REGULATION</scope>
    <scope>BIOPHYSICOCHEMICAL PROPERTIES</scope>
    <source>
        <strain>K12 / C600 / CR34 / ATCC 23724 / DSM 3925 / LMG 3041 / NCIB 10222</strain>
    </source>
</reference>
<reference key="11">
    <citation type="journal article" date="2001" name="Biochem. Biophys. Res. Commun.">
        <title>CueO is a multi-copper oxidase that confers copper tolerance in Escherichia coli.</title>
        <authorList>
            <person name="Grass G."/>
            <person name="Rensing C."/>
        </authorList>
    </citation>
    <scope>FUNCTION</scope>
    <scope>COFACTOR</scope>
    <scope>ACTIVITY REGULATION</scope>
    <scope>SUBUNIT</scope>
    <scope>SUBCELLULAR LOCATION</scope>
    <scope>MUTAGENESIS OF 500-CYS-HIS-501</scope>
    <source>
        <strain>K12 / W3110 / ATCC 27325 / DSM 5911</strain>
    </source>
</reference>
<reference key="12">
    <citation type="journal article" date="2004" name="J. Bacteriol.">
        <title>Linkage between catecholate siderophores and the multicopper oxidase CueO in Escherichia coli.</title>
        <authorList>
            <person name="Grass G."/>
            <person name="Thakali K."/>
            <person name="Klebba P.E."/>
            <person name="Thieme D."/>
            <person name="Mueller A."/>
            <person name="Wildner G.F."/>
            <person name="Rensing C."/>
        </authorList>
    </citation>
    <scope>FUNCTION IN ENTEROBACTIN OXIDATION</scope>
    <scope>BIOPHYSICOCHEMICAL PROPERTIES</scope>
    <scope>DISRUPTION PHENOTYPE</scope>
</reference>
<reference key="13">
    <citation type="journal article" date="2004" name="J. Bacteriol.">
        <title>Cuprous oxidase activity of CueO from Escherichia coli.</title>
        <authorList>
            <person name="Singh S.K."/>
            <person name="Grass G."/>
            <person name="Rensing C."/>
            <person name="Montfort W.R."/>
        </authorList>
    </citation>
    <scope>FUNCTION</scope>
    <scope>CATALYTIC ACTIVITY</scope>
    <scope>ACTIVITY REGULATION</scope>
    <scope>BIOPHYSICOCHEMICAL PROPERTIES</scope>
    <scope>MUTAGENESIS OF CYS-500</scope>
</reference>
<reference key="14">
    <citation type="journal article" date="2007" name="J. Biol. Chem.">
        <title>Export pathway selectivity of Escherichia coli twin arginine translocation signal peptides.</title>
        <authorList>
            <person name="Tullman-Ercek D."/>
            <person name="DeLisa M.P."/>
            <person name="Kawarasaki Y."/>
            <person name="Iranpour P."/>
            <person name="Ribnicky B."/>
            <person name="Palmer T."/>
            <person name="Georgiou G."/>
        </authorList>
    </citation>
    <scope>EXPORT VIA THE TAT-SYSTEM AND THE SEC-SYSTEM</scope>
</reference>
<reference key="15">
    <citation type="journal article" date="2010" name="J. Am. Chem. Soc.">
        <title>Reaction mechanisms of the multicopper oxidase CueO from Escherichia coli support its functional role as a cuprous oxidase.</title>
        <authorList>
            <person name="Djoko K.Y."/>
            <person name="Chong L.X."/>
            <person name="Wedd A.G."/>
            <person name="Xiao Z."/>
        </authorList>
    </citation>
    <scope>FUNCTION IN VIVO</scope>
    <scope>CATALYTIC ACTIVITY</scope>
    <scope>COFACTOR</scope>
</reference>
<reference key="16">
    <citation type="journal article" date="2015" name="Metallomics">
        <title>The functional roles of the three copper sites associated with the methionine-rich insert in the multicopper oxidase CueO from E. coli.</title>
        <authorList>
            <person name="Cortes L."/>
            <person name="Wedd A.G."/>
            <person name="Xiao Z."/>
        </authorList>
    </citation>
    <scope>FUNCTION</scope>
    <scope>DOMAIN</scope>
</reference>
<reference key="17">
    <citation type="journal article" date="2016" name="J. Biol. Chem.">
        <title>The Tat substrate CueO is transported in an incomplete folding state.</title>
        <authorList>
            <person name="Stolle P."/>
            <person name="Hou B."/>
            <person name="Brueser T."/>
        </authorList>
    </citation>
    <scope>SUBCELLULAR LOCATION</scope>
    <scope>EXPORT VIA THE TAT-SYSTEM</scope>
</reference>
<reference key="18">
    <citation type="journal article" date="2021" name="ChemBioChem">
        <title>Use of copper as a trigger for the in vivo activity of E. coli laccase CueO: a simple tool for biosynthetic purposes.</title>
        <authorList>
            <person name="Decembrino D."/>
            <person name="Girhard M."/>
            <person name="Urlacher V.B."/>
        </authorList>
    </citation>
    <scope>BIOTECHNOLOGY</scope>
</reference>
<reference evidence="33" key="19">
    <citation type="journal article" date="2002" name="Proc. Natl. Acad. Sci. U.S.A.">
        <title>Crystal structure and electron transfer kinetics of CueO, a multicopper oxidase required for copper homeostasis in Escherichia coli.</title>
        <authorList>
            <person name="Roberts S.A."/>
            <person name="Weichsel A."/>
            <person name="Grass G."/>
            <person name="Thakali K."/>
            <person name="Hazzard J.T."/>
            <person name="Tollin G."/>
            <person name="Rensing C."/>
            <person name="Montfort W.R."/>
        </authorList>
    </citation>
    <scope>X-RAY CRYSTALLOGRAPHY (1.4 ANGSTROMS) IN COMPLEX WITH COPPER</scope>
    <scope>FUNCTION AS A PHENOLOXIDASE</scope>
    <scope>COFACTOR</scope>
    <scope>ACTIVITY REGULATION</scope>
    <scope>BIOPHYSICOCHEMICAL PROPERTIES</scope>
    <scope>SUBUNIT</scope>
    <scope>DOMAIN</scope>
    <source>
        <strain>K12 / W3110 / ATCC 27325 / DSM 5911</strain>
    </source>
</reference>
<reference evidence="34 35" key="20">
    <citation type="journal article" date="2003" name="J. Biol. Chem.">
        <title>A labile regulatory copper ion lies near the T1 copper site in the multicopper oxidase CueO.</title>
        <authorList>
            <person name="Roberts S.A."/>
            <person name="Wildner G.F."/>
            <person name="Grass G."/>
            <person name="Weichsel A."/>
            <person name="Ambrus A."/>
            <person name="Rensing C."/>
            <person name="Montfort W.R."/>
        </authorList>
    </citation>
    <scope>X-RAY CRYSTALLOGRAPHY (1.50 ANGSTROMS) OF 29-516 IN COMPLEXES WITH COPPER</scope>
    <scope>BIOPHYSICOCHEMICAL PROPERTIES</scope>
    <scope>ACTIVITY REGULATION</scope>
    <scope>COFACTOR</scope>
    <scope>DOMAIN</scope>
    <scope>MUTAGENESIS OF MET-355; ASP-360; ASP-439 AND MET-441</scope>
</reference>
<reference evidence="36 37 38 39" key="21">
    <citation type="journal article" date="2007" name="Biochem. Biophys. Res. Commun.">
        <title>Crystal structures of E. coli laccase CueO at different copper concentrations.</title>
        <authorList>
            <person name="Li X."/>
            <person name="Wei Z."/>
            <person name="Zhang M."/>
            <person name="Peng X."/>
            <person name="Yu G."/>
            <person name="Teng M."/>
            <person name="Gong W."/>
        </authorList>
    </citation>
    <scope>X-RAY CRYSTALLOGRAPHY (1.92 ANGSTROMS) OF 29-516 IN COMPLEXES WITH COPPER</scope>
    <scope>COFACTOR</scope>
    <scope>MUTAGENESIS OF GLU-106</scope>
</reference>
<reference evidence="40 41" key="22">
    <citation type="journal article" date="2007" name="J. Mol. Biol.">
        <title>Structure and function of the engineered multicopper oxidase CueO from Escherichia coli--deletion of the methionine-rich helical region covering the substrate-binding site.</title>
        <authorList>
            <person name="Kataoka K."/>
            <person name="Komori H."/>
            <person name="Ueki Y."/>
            <person name="Konno Y."/>
            <person name="Kamitaka Y."/>
            <person name="Kurose S."/>
            <person name="Tsujimura S."/>
            <person name="Higuchi Y."/>
            <person name="Kano K."/>
            <person name="Seo D."/>
            <person name="Sakurai T."/>
        </authorList>
    </citation>
    <scope>X-RAY CRYSTALLOGRAPHY (1.06 ANGSTROMS) OF 29-516 OF METHIONINE-RICH TRUNCATED MUTANT IN COMPLEXES WITH COPPER</scope>
    <scope>FUNCTION</scope>
    <scope>ACTIVITY REGULATION</scope>
    <scope>COFACTOR</scope>
    <scope>MUTAGENESIS OF 357-PRO--HIS-406</scope>
</reference>
<reference evidence="42 43 44 45 46 47" key="23">
    <citation type="journal article" date="2011" name="J. Biol. Chem.">
        <title>Crystal structures of multicopper oxidase CueO bound to copper(I) and silver(I): functional role of a methionine-rich sequence.</title>
        <authorList>
            <person name="Singh S.K."/>
            <person name="Roberts S.A."/>
            <person name="McDevitt S.F."/>
            <person name="Weichsel A."/>
            <person name="Wildner G.F."/>
            <person name="Grass G.B."/>
            <person name="Rensing C."/>
            <person name="Montfort W.R."/>
        </authorList>
    </citation>
    <scope>X-RAY CRYSTALLOGRAPHY (1.10 ANGSTROMS) OF 29-516 OF APOENZYME; WILD-TYPE AND MUTANTS IN COMPLEXES WITH COPPER AND SILVER</scope>
    <scope>ACTIVITY REGULATION</scope>
    <scope>COFACTOR</scope>
    <scope>DOMAIN</scope>
</reference>
<reference evidence="48 49 50 51 53" key="24">
    <citation type="journal article" date="2014" name="Acta Crystallogr. D">
        <title>New insights into the catalytic active-site structure of multicopper oxidases.</title>
        <authorList>
            <person name="Komori H."/>
            <person name="Sugiyama R."/>
            <person name="Kataoka K."/>
            <person name="Miyazaki K."/>
            <person name="Higuchi Y."/>
            <person name="Sakurai T."/>
        </authorList>
    </citation>
    <scope>X-RAY CRYSTALLOGRAPHY (1.60 ANGSTROMS) OF 29-516 IN COMPLEXES WITH COPPER</scope>
</reference>
<reference evidence="52" key="25">
    <citation type="journal article" date="2016" name="Acta Crystallogr. F Struct. Biol. Commun.">
        <title>Exogenous acetate ion reaches the type II copper centre in CueO through the water-excretion channel and potentially affects the enzymatic activity.</title>
        <authorList>
            <person name="Komori H."/>
            <person name="Kataoka K."/>
            <person name="Tanaka S."/>
            <person name="Matsuda N."/>
            <person name="Higuchi Y."/>
            <person name="Sakurai T."/>
        </authorList>
    </citation>
    <scope>X-RAY CRYSTALLOGRAPHY (1.90 ANGSTROMS) OF 29-516 IN COMPLEX WITH COPPER</scope>
</reference>
<reference evidence="54 55" key="26">
    <citation type="journal article" date="2018" name="Sci. Rep.">
        <title>Crystal structures of multicopper oxidase CueO G304K mutant: structural basis of the increased laccase activity.</title>
        <authorList>
            <person name="Wang H."/>
            <person name="Liu X."/>
            <person name="Zhao J."/>
            <person name="Yue Q."/>
            <person name="Yan Y."/>
            <person name="Gao Z."/>
            <person name="Dong Y."/>
            <person name="Zhang Z."/>
            <person name="Fan Y."/>
            <person name="Tian J."/>
            <person name="Wu N."/>
            <person name="Gong Y."/>
        </authorList>
    </citation>
    <scope>X-RAY CRYSTALLOGRAPHY (1.49 ANGSTROMS) OF MUTANT LYS-304 IN COMPLEXES WITH COPPER</scope>
    <scope>MUTAGENESIS OF GLY-304</scope>
</reference>
<reference evidence="56 57 58" key="27">
    <citation type="journal article" date="2019" name="J. Biol. Chem.">
        <title>Development and structural characterization of an engineered multi-copper oxidase reporter of protein-protein interactions.</title>
        <authorList>
            <person name="Sana B."/>
            <person name="Chee S.M.Q."/>
            <person name="Wongsantichon J."/>
            <person name="Raghavan S."/>
            <person name="Robinson R.C."/>
            <person name="Ghadessy F.J."/>
        </authorList>
    </citation>
    <scope>X-RAY CRYSTALLOGRAPHY (1.80 ANGSTROMS) OF 29-516</scope>
    <scope>BIOTECHNOLOGY</scope>
</reference>
<name>CUEO_ECOLI</name>
<protein>
    <recommendedName>
        <fullName evidence="27">Multicopper oxidase CueO</fullName>
        <shortName evidence="29">MCO</shortName>
        <ecNumber evidence="12 16">1.16.3.4</ecNumber>
    </recommendedName>
    <alternativeName>
        <fullName>Blue copper oxidase CueO</fullName>
    </alternativeName>
    <alternativeName>
        <fullName evidence="30">Copper efflux oxidase</fullName>
        <shortName evidence="26">Cu efflux oxidase</shortName>
    </alternativeName>
    <alternativeName>
        <fullName evidence="28">Cuprous oxidase</fullName>
    </alternativeName>
</protein>
<feature type="signal peptide" description="Tat-type signal" evidence="2 25">
    <location>
        <begin position="1"/>
        <end position="28"/>
    </location>
</feature>
<feature type="chain" id="PRO_0000002951" description="Multicopper oxidase CueO">
    <location>
        <begin position="29"/>
        <end position="516"/>
    </location>
</feature>
<feature type="domain" description="Plastocyanin-like 1" evidence="1">
    <location>
        <begin position="55"/>
        <end position="165"/>
    </location>
</feature>
<feature type="domain" description="Plastocyanin-like 2" evidence="1">
    <location>
        <begin position="227"/>
        <end position="292"/>
    </location>
</feature>
<feature type="domain" description="Plastocyanin-like 3" evidence="1">
    <location>
        <begin position="402"/>
        <end position="516"/>
    </location>
</feature>
<feature type="region of interest" description="Methionine-rich region" evidence="32">
    <location>
        <begin position="355"/>
        <end position="400"/>
    </location>
</feature>
<feature type="binding site" description="type 2 copper site" evidence="9 10 13 15 17 18 33 34 35 37 38 39 40 41">
    <location>
        <position position="101"/>
    </location>
    <ligand>
        <name>Cu cation</name>
        <dbReference type="ChEBI" id="CHEBI:23378"/>
        <label>1</label>
    </ligand>
</feature>
<feature type="binding site" description="type 3 copper site" evidence="9 10 13 15 17 18 33 34 35 36 37 38 39 40 41">
    <location>
        <position position="103"/>
    </location>
    <ligand>
        <name>Cu cation</name>
        <dbReference type="ChEBI" id="CHEBI:23378"/>
        <label>2</label>
    </ligand>
</feature>
<feature type="binding site" description="type 3 copper site" evidence="9 10 13 15 17 18 33 34 35 36 37 38 39 40 41">
    <location>
        <position position="141"/>
    </location>
    <ligand>
        <name>Cu cation</name>
        <dbReference type="ChEBI" id="CHEBI:23378"/>
        <label>2</label>
    </ligand>
</feature>
<feature type="binding site" description="type 3 copper site" evidence="9 10 13 15 17 18 33 34 35 36 37 38 39 40 41">
    <location>
        <position position="143"/>
    </location>
    <ligand>
        <name>Cu cation</name>
        <dbReference type="ChEBI" id="CHEBI:23378"/>
        <label>3</label>
    </ligand>
</feature>
<feature type="binding site" description="type 1 copper site" evidence="9 10 13 15 17 18 33 34 35 36 37 38 39 40 41">
    <location>
        <position position="443"/>
    </location>
    <ligand>
        <name>Cu cation</name>
        <dbReference type="ChEBI" id="CHEBI:23378"/>
        <label>4</label>
    </ligand>
</feature>
<feature type="binding site" description="type 2 copper site" evidence="9 10 13 15 17 18 33 34 35 37 38 39 40 41">
    <location>
        <position position="446"/>
    </location>
    <ligand>
        <name>Cu cation</name>
        <dbReference type="ChEBI" id="CHEBI:23378"/>
        <label>1</label>
    </ligand>
</feature>
<feature type="binding site" description="type 3 copper site" evidence="9 10 13 15 17 18 33 34 35 36 37 38 39 40 41">
    <location>
        <position position="448"/>
    </location>
    <ligand>
        <name>Cu cation</name>
        <dbReference type="ChEBI" id="CHEBI:23378"/>
        <label>3</label>
    </ligand>
</feature>
<feature type="binding site" description="type 3 copper site" evidence="9 10 13 15 17 18 33 34 35 36 37 38 39 40 41">
    <location>
        <position position="499"/>
    </location>
    <ligand>
        <name>Cu cation</name>
        <dbReference type="ChEBI" id="CHEBI:23378"/>
        <label>3</label>
    </ligand>
</feature>
<feature type="binding site" description="type 1 copper site" evidence="9 10 13 15 17 18 33 34 35 36 37 38 39 40 41">
    <location>
        <position position="500"/>
    </location>
    <ligand>
        <name>Cu cation</name>
        <dbReference type="ChEBI" id="CHEBI:23378"/>
        <label>4</label>
    </ligand>
</feature>
<feature type="binding site" description="type 3 copper site" evidence="9 10 13 15 17 18 33 34 35 36 37 38 39 40 41">
    <location>
        <position position="501"/>
    </location>
    <ligand>
        <name>Cu cation</name>
        <dbReference type="ChEBI" id="CHEBI:23378"/>
        <label>2</label>
    </ligand>
</feature>
<feature type="binding site" description="type 1 copper site" evidence="9 10 13 15 17 18 33 34 35 36 37 38 39 40 41">
    <location>
        <position position="505"/>
    </location>
    <ligand>
        <name>Cu cation</name>
        <dbReference type="ChEBI" id="CHEBI:23378"/>
        <label>4</label>
    </ligand>
</feature>
<feature type="mutagenesis site" description="Abolishes transport to periplasm." evidence="3">
    <original>R</original>
    <variation>K</variation>
    <location>
        <position position="3"/>
    </location>
</feature>
<feature type="mutagenesis site" description="Does not slow export to the periplasm." evidence="3">
    <original>K</original>
    <variation>A</variation>
    <location>
        <position position="8"/>
    </location>
</feature>
<feature type="mutagenesis site" description="Small increase in export rate." evidence="3">
    <original>K</original>
    <variation>R</variation>
    <location>
        <position position="8"/>
    </location>
</feature>
<feature type="mutagenesis site" description="Increases oxidase activity with ABTS as substrate." evidence="13">
    <original>E</original>
    <variation>F</variation>
    <location>
        <position position="106"/>
    </location>
</feature>
<feature type="mutagenesis site" description="Retains 20% of cuprous oxidase activity. Increases oxidase activity with ABTS as substrate. Shows dramatic conformational changes in methionine-rich helix and the relative regulatory loop." evidence="22">
    <original>G</original>
    <variation>K</variation>
    <location>
        <position position="304"/>
    </location>
</feature>
<feature type="mutagenesis site" description="Almost loss of oxidase activity with 2,6-DMP as substrate. Loss of the copper tolerance phenotype." evidence="10">
    <original>M</original>
    <variation>L</variation>
    <location>
        <position position="355"/>
    </location>
</feature>
<feature type="mutagenesis site" description="Retains only 10% of cuprous oxidase activity. 30-fold and 10-fold increase in activities with ABTS and pPD, respectively, in the absence of exogenous Cu(2+), but does not change these activities in the presence of excess Cu(2+)." evidence="15">
    <location>
        <begin position="357"/>
        <end position="406"/>
    </location>
</feature>
<feature type="mutagenesis site" description="Strong decrease in oxidase activity with 2,6-DMP as substrate. Loss of the copper tolerance phenotype." evidence="10">
    <original>D</original>
    <variation>A</variation>
    <location>
        <position position="360"/>
    </location>
</feature>
<feature type="mutagenesis site" description="Decrease in oxidase activity with 2,6-DMP as substrate." evidence="10">
    <original>D</original>
    <variation>A</variation>
    <location>
        <position position="439"/>
    </location>
</feature>
<feature type="mutagenesis site" description="Strong decrease in oxidase activity with 2,6-DMP as substrate. Affects copper incorporation into the T1 copper site." evidence="10">
    <original>M</original>
    <variation>L</variation>
    <location>
        <position position="441"/>
    </location>
</feature>
<feature type="mutagenesis site" description="Residual DMP oxidase activity and loss of resistance to copper. Decreases copper content." evidence="8">
    <original>CH</original>
    <variation>SR</variation>
    <location>
        <begin position="500"/>
        <end position="501"/>
    </location>
</feature>
<feature type="mutagenesis site" description="Loss of cuprous oxidase activity." evidence="12">
    <original>C</original>
    <variation>S</variation>
    <location>
        <position position="500"/>
    </location>
</feature>
<feature type="strand" evidence="60">
    <location>
        <begin position="47"/>
        <end position="59"/>
    </location>
</feature>
<feature type="strand" evidence="60">
    <location>
        <begin position="62"/>
        <end position="74"/>
    </location>
</feature>
<feature type="strand" evidence="60">
    <location>
        <begin position="77"/>
        <end position="81"/>
    </location>
</feature>
<feature type="strand" evidence="60">
    <location>
        <begin position="85"/>
        <end position="92"/>
    </location>
</feature>
<feature type="strand" evidence="60">
    <location>
        <begin position="94"/>
        <end position="96"/>
    </location>
</feature>
<feature type="strand" evidence="60">
    <location>
        <begin position="101"/>
        <end position="103"/>
    </location>
</feature>
<feature type="helix" evidence="60">
    <location>
        <begin position="109"/>
        <end position="111"/>
    </location>
</feature>
<feature type="helix" evidence="61">
    <location>
        <begin position="114"/>
        <end position="117"/>
    </location>
</feature>
<feature type="strand" evidence="60">
    <location>
        <begin position="124"/>
        <end position="130"/>
    </location>
</feature>
<feature type="strand" evidence="60">
    <location>
        <begin position="135"/>
        <end position="141"/>
    </location>
</feature>
<feature type="turn" evidence="60">
    <location>
        <begin position="145"/>
        <end position="147"/>
    </location>
</feature>
<feature type="helix" evidence="60">
    <location>
        <begin position="148"/>
        <end position="153"/>
    </location>
</feature>
<feature type="strand" evidence="60">
    <location>
        <begin position="158"/>
        <end position="163"/>
    </location>
</feature>
<feature type="helix" evidence="60">
    <location>
        <begin position="165"/>
        <end position="169"/>
    </location>
</feature>
<feature type="turn" evidence="60">
    <location>
        <begin position="177"/>
        <end position="179"/>
    </location>
</feature>
<feature type="strand" evidence="60">
    <location>
        <begin position="180"/>
        <end position="188"/>
    </location>
</feature>
<feature type="strand" evidence="60">
    <location>
        <begin position="194"/>
        <end position="196"/>
    </location>
</feature>
<feature type="helix" evidence="60">
    <location>
        <begin position="202"/>
        <end position="207"/>
    </location>
</feature>
<feature type="strand" evidence="60">
    <location>
        <begin position="212"/>
        <end position="216"/>
    </location>
</feature>
<feature type="strand" evidence="60">
    <location>
        <begin position="219"/>
        <end position="221"/>
    </location>
</feature>
<feature type="strand" evidence="60">
    <location>
        <begin position="223"/>
        <end position="237"/>
    </location>
</feature>
<feature type="strand" evidence="60">
    <location>
        <begin position="244"/>
        <end position="248"/>
    </location>
</feature>
<feature type="strand" evidence="60">
    <location>
        <begin position="254"/>
        <end position="259"/>
    </location>
</feature>
<feature type="strand" evidence="60">
    <location>
        <begin position="262"/>
        <end position="271"/>
    </location>
</feature>
<feature type="strand" evidence="60">
    <location>
        <begin position="273"/>
        <end position="275"/>
    </location>
</feature>
<feature type="strand" evidence="60">
    <location>
        <begin position="280"/>
        <end position="287"/>
    </location>
</feature>
<feature type="strand" evidence="60">
    <location>
        <begin position="293"/>
        <end position="297"/>
    </location>
</feature>
<feature type="turn" evidence="60">
    <location>
        <begin position="303"/>
        <end position="306"/>
    </location>
</feature>
<feature type="turn" evidence="60">
    <location>
        <begin position="308"/>
        <end position="311"/>
    </location>
</feature>
<feature type="strand" evidence="60">
    <location>
        <begin position="314"/>
        <end position="325"/>
    </location>
</feature>
<feature type="strand" evidence="60">
    <location>
        <begin position="348"/>
        <end position="355"/>
    </location>
</feature>
<feature type="helix" evidence="60">
    <location>
        <begin position="357"/>
        <end position="371"/>
    </location>
</feature>
<feature type="helix" evidence="60">
    <location>
        <begin position="372"/>
        <end position="376"/>
    </location>
</feature>
<feature type="helix" evidence="59">
    <location>
        <begin position="381"/>
        <end position="384"/>
    </location>
</feature>
<feature type="helix" evidence="62">
    <location>
        <begin position="387"/>
        <end position="396"/>
    </location>
</feature>
<feature type="turn" evidence="62">
    <location>
        <begin position="397"/>
        <end position="399"/>
    </location>
</feature>
<feature type="helix" evidence="60">
    <location>
        <begin position="400"/>
        <end position="402"/>
    </location>
</feature>
<feature type="helix" evidence="60">
    <location>
        <begin position="404"/>
        <end position="406"/>
    </location>
</feature>
<feature type="strand" evidence="60">
    <location>
        <begin position="408"/>
        <end position="410"/>
    </location>
</feature>
<feature type="strand" evidence="60">
    <location>
        <begin position="421"/>
        <end position="424"/>
    </location>
</feature>
<feature type="strand" evidence="60">
    <location>
        <begin position="426"/>
        <end position="428"/>
    </location>
</feature>
<feature type="strand" evidence="60">
    <location>
        <begin position="430"/>
        <end position="435"/>
    </location>
</feature>
<feature type="strand" evidence="60">
    <location>
        <begin position="443"/>
        <end position="447"/>
    </location>
</feature>
<feature type="strand" evidence="60">
    <location>
        <begin position="452"/>
        <end position="457"/>
    </location>
</feature>
<feature type="helix" evidence="60">
    <location>
        <begin position="464"/>
        <end position="466"/>
    </location>
</feature>
<feature type="strand" evidence="60">
    <location>
        <begin position="470"/>
        <end position="484"/>
    </location>
</feature>
<feature type="helix" evidence="60">
    <location>
        <begin position="492"/>
        <end position="494"/>
    </location>
</feature>
<feature type="strand" evidence="60">
    <location>
        <begin position="496"/>
        <end position="502"/>
    </location>
</feature>
<feature type="helix" evidence="60">
    <location>
        <begin position="503"/>
        <end position="507"/>
    </location>
</feature>
<feature type="strand" evidence="60">
    <location>
        <begin position="511"/>
        <end position="516"/>
    </location>
</feature>
<dbReference type="EC" id="1.16.3.4" evidence="12 16"/>
<dbReference type="EMBL" id="U00096">
    <property type="protein sequence ID" value="AAC73234.1"/>
    <property type="molecule type" value="Genomic_DNA"/>
</dbReference>
<dbReference type="EMBL" id="AP009048">
    <property type="protein sequence ID" value="BAB96698.2"/>
    <property type="molecule type" value="Genomic_DNA"/>
</dbReference>
<dbReference type="PIR" id="C64735">
    <property type="entry name" value="C64735"/>
</dbReference>
<dbReference type="RefSeq" id="NP_414665.1">
    <property type="nucleotide sequence ID" value="NC_000913.3"/>
</dbReference>
<dbReference type="RefSeq" id="WP_001189647.1">
    <property type="nucleotide sequence ID" value="NZ_STEB01000010.1"/>
</dbReference>
<dbReference type="PDB" id="1KV7">
    <property type="method" value="X-ray"/>
    <property type="resolution" value="1.40 A"/>
    <property type="chains" value="A=29-516"/>
</dbReference>
<dbReference type="PDB" id="1N68">
    <property type="method" value="X-ray"/>
    <property type="resolution" value="1.70 A"/>
    <property type="chains" value="A=29-516"/>
</dbReference>
<dbReference type="PDB" id="1PF3">
    <property type="method" value="X-ray"/>
    <property type="resolution" value="1.50 A"/>
    <property type="chains" value="A=29-516"/>
</dbReference>
<dbReference type="PDB" id="2FQD">
    <property type="method" value="X-ray"/>
    <property type="resolution" value="2.40 A"/>
    <property type="chains" value="A=29-516"/>
</dbReference>
<dbReference type="PDB" id="2FQE">
    <property type="method" value="X-ray"/>
    <property type="resolution" value="1.92 A"/>
    <property type="chains" value="A=29-516"/>
</dbReference>
<dbReference type="PDB" id="2FQF">
    <property type="method" value="X-ray"/>
    <property type="resolution" value="2.00 A"/>
    <property type="chains" value="A=29-516"/>
</dbReference>
<dbReference type="PDB" id="2FQG">
    <property type="method" value="X-ray"/>
    <property type="resolution" value="2.30 A"/>
    <property type="chains" value="A=29-516"/>
</dbReference>
<dbReference type="PDB" id="2YXV">
    <property type="method" value="X-ray"/>
    <property type="resolution" value="1.81 A"/>
    <property type="chains" value="A/B=29-516"/>
</dbReference>
<dbReference type="PDB" id="2YXW">
    <property type="method" value="X-ray"/>
    <property type="resolution" value="1.50 A"/>
    <property type="chains" value="A/B=29-516"/>
</dbReference>
<dbReference type="PDB" id="3NSC">
    <property type="method" value="X-ray"/>
    <property type="resolution" value="1.50 A"/>
    <property type="chains" value="A=29-516"/>
</dbReference>
<dbReference type="PDB" id="3NSD">
    <property type="method" value="X-ray"/>
    <property type="resolution" value="2.00 A"/>
    <property type="chains" value="A=29-516"/>
</dbReference>
<dbReference type="PDB" id="3NSF">
    <property type="method" value="X-ray"/>
    <property type="resolution" value="2.00 A"/>
    <property type="chains" value="A=29-516"/>
</dbReference>
<dbReference type="PDB" id="3NSY">
    <property type="method" value="X-ray"/>
    <property type="resolution" value="2.10 A"/>
    <property type="chains" value="A=29-516"/>
</dbReference>
<dbReference type="PDB" id="3NT0">
    <property type="method" value="X-ray"/>
    <property type="resolution" value="1.80 A"/>
    <property type="chains" value="A=29-516"/>
</dbReference>
<dbReference type="PDB" id="3OD3">
    <property type="method" value="X-ray"/>
    <property type="resolution" value="1.10 A"/>
    <property type="chains" value="A=29-516"/>
</dbReference>
<dbReference type="PDB" id="3PAU">
    <property type="method" value="X-ray"/>
    <property type="resolution" value="2.00 A"/>
    <property type="chains" value="A=29-516"/>
</dbReference>
<dbReference type="PDB" id="3PAV">
    <property type="method" value="X-ray"/>
    <property type="resolution" value="1.45 A"/>
    <property type="chains" value="A=29-516"/>
</dbReference>
<dbReference type="PDB" id="3QQX">
    <property type="method" value="X-ray"/>
    <property type="resolution" value="1.50 A"/>
    <property type="chains" value="A=29-516"/>
</dbReference>
<dbReference type="PDB" id="3UAA">
    <property type="method" value="X-ray"/>
    <property type="resolution" value="1.70 A"/>
    <property type="chains" value="A=29-516"/>
</dbReference>
<dbReference type="PDB" id="3UAB">
    <property type="method" value="X-ray"/>
    <property type="resolution" value="1.30 A"/>
    <property type="chains" value="A=29-516"/>
</dbReference>
<dbReference type="PDB" id="3UAC">
    <property type="method" value="X-ray"/>
    <property type="resolution" value="1.30 A"/>
    <property type="chains" value="A=29-516"/>
</dbReference>
<dbReference type="PDB" id="3UAD">
    <property type="method" value="X-ray"/>
    <property type="resolution" value="1.10 A"/>
    <property type="chains" value="A=29-516"/>
</dbReference>
<dbReference type="PDB" id="3UAE">
    <property type="method" value="X-ray"/>
    <property type="resolution" value="1.30 A"/>
    <property type="chains" value="A=29-516"/>
</dbReference>
<dbReference type="PDB" id="4E9Q">
    <property type="method" value="X-ray"/>
    <property type="resolution" value="1.30 A"/>
    <property type="chains" value="A=29-516"/>
</dbReference>
<dbReference type="PDB" id="4E9R">
    <property type="method" value="X-ray"/>
    <property type="resolution" value="1.30 A"/>
    <property type="chains" value="A=29-516"/>
</dbReference>
<dbReference type="PDB" id="4E9S">
    <property type="method" value="X-ray"/>
    <property type="resolution" value="1.06 A"/>
    <property type="chains" value="A=29-516"/>
</dbReference>
<dbReference type="PDB" id="4E9T">
    <property type="method" value="X-ray"/>
    <property type="resolution" value="1.30 A"/>
    <property type="chains" value="A=29-516"/>
</dbReference>
<dbReference type="PDB" id="4EF3">
    <property type="method" value="X-ray"/>
    <property type="resolution" value="1.90 A"/>
    <property type="chains" value="A=29-516"/>
</dbReference>
<dbReference type="PDB" id="4HAK">
    <property type="method" value="X-ray"/>
    <property type="resolution" value="1.40 A"/>
    <property type="chains" value="A=29-516"/>
</dbReference>
<dbReference type="PDB" id="4HAL">
    <property type="method" value="X-ray"/>
    <property type="resolution" value="1.40 A"/>
    <property type="chains" value="A=29-516"/>
</dbReference>
<dbReference type="PDB" id="4NER">
    <property type="method" value="X-ray"/>
    <property type="resolution" value="1.60 A"/>
    <property type="chains" value="A=29-516"/>
</dbReference>
<dbReference type="PDB" id="5B7E">
    <property type="method" value="X-ray"/>
    <property type="resolution" value="1.42 A"/>
    <property type="chains" value="A=1-516"/>
</dbReference>
<dbReference type="PDB" id="5B7F">
    <property type="method" value="X-ray"/>
    <property type="resolution" value="1.45 A"/>
    <property type="chains" value="A=29-516"/>
</dbReference>
<dbReference type="PDB" id="5B7M">
    <property type="method" value="X-ray"/>
    <property type="resolution" value="1.80 A"/>
    <property type="chains" value="A/B/C=29-516"/>
</dbReference>
<dbReference type="PDB" id="5YS1">
    <property type="method" value="X-ray"/>
    <property type="resolution" value="1.49 A"/>
    <property type="chains" value="A=1-516"/>
</dbReference>
<dbReference type="PDB" id="5YS5">
    <property type="method" value="X-ray"/>
    <property type="resolution" value="2.20 A"/>
    <property type="chains" value="A=1-516"/>
</dbReference>
<dbReference type="PDB" id="6IM7">
    <property type="method" value="X-ray"/>
    <property type="resolution" value="1.97 A"/>
    <property type="chains" value="A=29-516"/>
</dbReference>
<dbReference type="PDB" id="6IM8">
    <property type="method" value="X-ray"/>
    <property type="resolution" value="1.80 A"/>
    <property type="chains" value="A=29-516"/>
</dbReference>
<dbReference type="PDB" id="6IM9">
    <property type="method" value="X-ray"/>
    <property type="resolution" value="3.30 A"/>
    <property type="chains" value="A=29-516"/>
</dbReference>
<dbReference type="PDB" id="7F0V">
    <property type="method" value="X-ray"/>
    <property type="resolution" value="1.49 A"/>
    <property type="chains" value="A/B=1-516"/>
</dbReference>
<dbReference type="PDB" id="7F19">
    <property type="method" value="X-ray"/>
    <property type="resolution" value="1.77 A"/>
    <property type="chains" value="A=1-516"/>
</dbReference>
<dbReference type="PDBsum" id="1KV7"/>
<dbReference type="PDBsum" id="1N68"/>
<dbReference type="PDBsum" id="1PF3"/>
<dbReference type="PDBsum" id="2FQD"/>
<dbReference type="PDBsum" id="2FQE"/>
<dbReference type="PDBsum" id="2FQF"/>
<dbReference type="PDBsum" id="2FQG"/>
<dbReference type="PDBsum" id="2YXV"/>
<dbReference type="PDBsum" id="2YXW"/>
<dbReference type="PDBsum" id="3NSC"/>
<dbReference type="PDBsum" id="3NSD"/>
<dbReference type="PDBsum" id="3NSF"/>
<dbReference type="PDBsum" id="3NSY"/>
<dbReference type="PDBsum" id="3NT0"/>
<dbReference type="PDBsum" id="3OD3"/>
<dbReference type="PDBsum" id="3PAU"/>
<dbReference type="PDBsum" id="3PAV"/>
<dbReference type="PDBsum" id="3QQX"/>
<dbReference type="PDBsum" id="3UAA"/>
<dbReference type="PDBsum" id="3UAB"/>
<dbReference type="PDBsum" id="3UAC"/>
<dbReference type="PDBsum" id="3UAD"/>
<dbReference type="PDBsum" id="3UAE"/>
<dbReference type="PDBsum" id="4E9Q"/>
<dbReference type="PDBsum" id="4E9R"/>
<dbReference type="PDBsum" id="4E9S"/>
<dbReference type="PDBsum" id="4E9T"/>
<dbReference type="PDBsum" id="4EF3"/>
<dbReference type="PDBsum" id="4HAK"/>
<dbReference type="PDBsum" id="4HAL"/>
<dbReference type="PDBsum" id="4NER"/>
<dbReference type="PDBsum" id="5B7E"/>
<dbReference type="PDBsum" id="5B7F"/>
<dbReference type="PDBsum" id="5B7M"/>
<dbReference type="PDBsum" id="5YS1"/>
<dbReference type="PDBsum" id="5YS5"/>
<dbReference type="PDBsum" id="6IM7"/>
<dbReference type="PDBsum" id="6IM8"/>
<dbReference type="PDBsum" id="6IM9"/>
<dbReference type="PDBsum" id="7F0V"/>
<dbReference type="PDBsum" id="7F19"/>
<dbReference type="SMR" id="P36649"/>
<dbReference type="BioGRID" id="4261957">
    <property type="interactions" value="20"/>
</dbReference>
<dbReference type="DIP" id="DIP-11178N"/>
<dbReference type="FunCoup" id="P36649">
    <property type="interactions" value="85"/>
</dbReference>
<dbReference type="IntAct" id="P36649">
    <property type="interactions" value="5"/>
</dbReference>
<dbReference type="STRING" id="511145.b0123"/>
<dbReference type="TCDB" id="1.B.76.1.8">
    <property type="family name" value="the copper resistance putative porin (copb) family"/>
</dbReference>
<dbReference type="jPOST" id="P36649"/>
<dbReference type="PaxDb" id="511145-b0123"/>
<dbReference type="EnsemblBacteria" id="AAC73234">
    <property type="protein sequence ID" value="AAC73234"/>
    <property type="gene ID" value="b0123"/>
</dbReference>
<dbReference type="GeneID" id="947736"/>
<dbReference type="KEGG" id="ecj:JW0119"/>
<dbReference type="KEGG" id="eco:b0123"/>
<dbReference type="KEGG" id="ecoc:C3026_00520"/>
<dbReference type="PATRIC" id="fig|1411691.4.peg.2159"/>
<dbReference type="EchoBASE" id="EB2223"/>
<dbReference type="eggNOG" id="COG2132">
    <property type="taxonomic scope" value="Bacteria"/>
</dbReference>
<dbReference type="HOGENOM" id="CLU_009100_2_4_6"/>
<dbReference type="InParanoid" id="P36649"/>
<dbReference type="OMA" id="YQLDVMS"/>
<dbReference type="OrthoDB" id="9757546at2"/>
<dbReference type="PhylomeDB" id="P36649"/>
<dbReference type="BioCyc" id="EcoCyc:EG12318-MONOMER"/>
<dbReference type="BioCyc" id="MetaCyc:EG12318-MONOMER"/>
<dbReference type="SABIO-RK" id="P36649"/>
<dbReference type="EvolutionaryTrace" id="P36649"/>
<dbReference type="PHI-base" id="PHI:10985"/>
<dbReference type="PRO" id="PR:P36649"/>
<dbReference type="Proteomes" id="UP000000625">
    <property type="component" value="Chromosome"/>
</dbReference>
<dbReference type="GO" id="GO:0030288">
    <property type="term" value="C:outer membrane-bounded periplasmic space"/>
    <property type="evidence" value="ECO:0000314"/>
    <property type="project" value="EcoCyc"/>
</dbReference>
<dbReference type="GO" id="GO:0042597">
    <property type="term" value="C:periplasmic space"/>
    <property type="evidence" value="ECO:0000314"/>
    <property type="project" value="EcoliWiki"/>
</dbReference>
<dbReference type="GO" id="GO:0005507">
    <property type="term" value="F:copper ion binding"/>
    <property type="evidence" value="ECO:0000314"/>
    <property type="project" value="EcoCyc"/>
</dbReference>
<dbReference type="GO" id="GO:0004322">
    <property type="term" value="F:ferroxidase activity"/>
    <property type="evidence" value="ECO:0000314"/>
    <property type="project" value="EcoCyc"/>
</dbReference>
<dbReference type="GO" id="GO:0016682">
    <property type="term" value="F:oxidoreductase activity, acting on diphenols and related substances as donors, oxygen as acceptor"/>
    <property type="evidence" value="ECO:0000314"/>
    <property type="project" value="EcoCyc"/>
</dbReference>
<dbReference type="GO" id="GO:0016722">
    <property type="term" value="F:oxidoreductase activity, acting on metal ions"/>
    <property type="evidence" value="ECO:0000314"/>
    <property type="project" value="EcoliWiki"/>
</dbReference>
<dbReference type="GO" id="GO:0016724">
    <property type="term" value="F:oxidoreductase activity, acting on metal ions, oxygen as acceptor"/>
    <property type="evidence" value="ECO:0000314"/>
    <property type="project" value="EcoCyc"/>
</dbReference>
<dbReference type="GO" id="GO:0010273">
    <property type="term" value="P:detoxification of copper ion"/>
    <property type="evidence" value="ECO:0000314"/>
    <property type="project" value="EcoCyc"/>
</dbReference>
<dbReference type="GO" id="GO:0046688">
    <property type="term" value="P:response to copper ion"/>
    <property type="evidence" value="ECO:0000315"/>
    <property type="project" value="EcoCyc"/>
</dbReference>
<dbReference type="CDD" id="cd04232">
    <property type="entry name" value="CuRO_1_CueO_FtsP"/>
    <property type="match status" value="1"/>
</dbReference>
<dbReference type="CDD" id="cd13867">
    <property type="entry name" value="CuRO_2_CueO_FtsP"/>
    <property type="match status" value="1"/>
</dbReference>
<dbReference type="CDD" id="cd13890">
    <property type="entry name" value="CuRO_3_CueO_FtsP"/>
    <property type="match status" value="1"/>
</dbReference>
<dbReference type="FunFam" id="2.60.40.420:FF:000039">
    <property type="entry name" value="Blue copper oxidase CueO"/>
    <property type="match status" value="1"/>
</dbReference>
<dbReference type="FunFam" id="2.60.40.420:FF:000041">
    <property type="entry name" value="Blue copper oxidase CueO"/>
    <property type="match status" value="1"/>
</dbReference>
<dbReference type="FunFam" id="2.60.40.420:FF:000043">
    <property type="entry name" value="Blue copper oxidase CueO"/>
    <property type="match status" value="1"/>
</dbReference>
<dbReference type="Gene3D" id="2.60.40.420">
    <property type="entry name" value="Cupredoxins - blue copper proteins"/>
    <property type="match status" value="3"/>
</dbReference>
<dbReference type="InterPro" id="IPR011707">
    <property type="entry name" value="Cu-oxidase-like_N"/>
</dbReference>
<dbReference type="InterPro" id="IPR001117">
    <property type="entry name" value="Cu-oxidase_2nd"/>
</dbReference>
<dbReference type="InterPro" id="IPR011706">
    <property type="entry name" value="Cu-oxidase_C"/>
</dbReference>
<dbReference type="InterPro" id="IPR045087">
    <property type="entry name" value="Cu-oxidase_fam"/>
</dbReference>
<dbReference type="InterPro" id="IPR002355">
    <property type="entry name" value="Cu_oxidase_Cu_BS"/>
</dbReference>
<dbReference type="InterPro" id="IPR008972">
    <property type="entry name" value="Cupredoxin"/>
</dbReference>
<dbReference type="InterPro" id="IPR006311">
    <property type="entry name" value="TAT_signal"/>
</dbReference>
<dbReference type="NCBIfam" id="NF008205">
    <property type="entry name" value="PRK10965.1"/>
    <property type="match status" value="1"/>
</dbReference>
<dbReference type="PANTHER" id="PTHR48267:SF1">
    <property type="entry name" value="BILIRUBIN OXIDASE"/>
    <property type="match status" value="1"/>
</dbReference>
<dbReference type="PANTHER" id="PTHR48267">
    <property type="entry name" value="CUPREDOXIN SUPERFAMILY PROTEIN"/>
    <property type="match status" value="1"/>
</dbReference>
<dbReference type="Pfam" id="PF00394">
    <property type="entry name" value="Cu-oxidase"/>
    <property type="match status" value="1"/>
</dbReference>
<dbReference type="Pfam" id="PF07731">
    <property type="entry name" value="Cu-oxidase_2"/>
    <property type="match status" value="1"/>
</dbReference>
<dbReference type="Pfam" id="PF07732">
    <property type="entry name" value="Cu-oxidase_3"/>
    <property type="match status" value="1"/>
</dbReference>
<dbReference type="SUPFAM" id="SSF49503">
    <property type="entry name" value="Cupredoxins"/>
    <property type="match status" value="3"/>
</dbReference>
<dbReference type="PROSITE" id="PS00080">
    <property type="entry name" value="MULTICOPPER_OXIDASE2"/>
    <property type="match status" value="1"/>
</dbReference>
<dbReference type="PROSITE" id="PS51318">
    <property type="entry name" value="TAT"/>
    <property type="match status" value="1"/>
</dbReference>
<sequence>MQRRDFLKYSVALGVASALPLWSRAVFAAERPTLPIPDLLTTDARNRIQLTIGAGQSTFGGKTATTWGYNGNLLGPAVKLQRGKAVTVDIYNQLTEETTLHWHGLEVPGEVDGGPQGIIPPGGKRSVTLNVDQPAATCWFHPHQHGKTGRQVAMGLAGLVVIEDDEILKLMLPKQWGIDDVPVIVQDKKFSADGQIDYQLDVMTAAVGWFGDTLLTNGAIYPQHAAPRGWLRLRLLNGCNARSLNFATSDNRPLYVIASDGGLLPEPVKVSELPVLMGERFEVLVEVNDNKPFDLVTLPVSQMGMAIAPFDKPHPVMRIQPIAISASGALPDTLSSLPALPSLEGLTVRKLQLSMDPMLDMMGMQMLMEKYGDQAMAGMDHSQMMGHMGHGNMNHMNHGGKFDFHHANKINGQAFDMNKPMFAAAKGQYERWVISGVGDMMLHPFHIHGTQFRILSENGKPPAAHRAGWKDTVKVEGNVSEVLVKFNHDAPKEHAYMAHCHLLEHEDTGMMLGFTV</sequence>
<proteinExistence type="evidence at protein level"/>